<comment type="function">
    <text evidence="1 3">Catalyzes the transfer of a sialic acid from a CMP-linked sialic acid donor onto a terminal alpha-2,3-, alpha-2,6-, or alpha-2,8-linked sialic acid of an N-linked glycan acceptor through alpha-2,8-linkages. Therefore, participates in polysialic acid synthesis on various sialylated N-acetyllactosaminyl oligosaccharides (alpha-2,3-, alpha-2,6-, or alpha-2,8-linked sialic acid), including NCAM1, NCAM1 N-glycans, FETUB N-glycans, and to a lesser extent sialylparagloboside (SPG) and AHSG, which does not require the initial addition of an alpha 2,8-sialic acid (By similarity). However, does not exhibit sialic acid-polymerase activity (By similarity). Catalyzes polysialic acid synthesis in the hippocampal on NCAM1 and supports neurite outgrowth (By similarity). ST8SIA2-mediated polysialylation influences on oligodendrocyte differentiation and may promote the integrity of myelin and axons (By similarity).</text>
</comment>
<comment type="catalytic activity">
    <reaction evidence="3">
        <text>[N-acetyl-alpha-D-neuraminosyl-(2-&gt;8)](n) + CMP-N-acetyl-beta-neuraminate = [N-acetyl-alpha-D-neuraminosyl-(2-&gt;8)](n+1) + CMP + H(+)</text>
        <dbReference type="Rhea" id="RHEA:77367"/>
        <dbReference type="Rhea" id="RHEA-COMP:14315"/>
        <dbReference type="Rhea" id="RHEA-COMP:18878"/>
        <dbReference type="ChEBI" id="CHEBI:15378"/>
        <dbReference type="ChEBI" id="CHEBI:57812"/>
        <dbReference type="ChEBI" id="CHEBI:60377"/>
        <dbReference type="ChEBI" id="CHEBI:139252"/>
    </reaction>
    <physiologicalReaction direction="left-to-right" evidence="3">
        <dbReference type="Rhea" id="RHEA:77368"/>
    </physiologicalReaction>
</comment>
<comment type="pathway">
    <text evidence="3">Protein modification; protein glycosylation.</text>
</comment>
<comment type="subcellular location">
    <subcellularLocation>
        <location evidence="3">Golgi apparatus membrane</location>
        <topology evidence="3">Single-pass type II membrane protein</topology>
    </subcellularLocation>
    <subcellularLocation>
        <location evidence="3">Secreted</location>
    </subcellularLocation>
    <subcellularLocation>
        <location evidence="3">Cell membrane</location>
    </subcellularLocation>
    <text evidence="3">Also trafficks to the cell surface.</text>
</comment>
<comment type="PTM">
    <text evidence="3">Autopolysialylated. Autopolysialylation is not a prerequisite for the polysialylation acitity, but enhances the polysialylation acitity.</text>
</comment>
<comment type="similarity">
    <text evidence="5">Belongs to the glycosyltransferase 29 family.</text>
</comment>
<protein>
    <recommendedName>
        <fullName evidence="3">Alpha-2,8-sialyltransferase 8B</fullName>
        <ecNumber evidence="3">2.4.3.-</ecNumber>
    </recommendedName>
    <alternativeName>
        <fullName>Sialyltransferase 8B</fullName>
        <shortName>SIAT8-B</shortName>
    </alternativeName>
    <alternativeName>
        <fullName>Sialyltransferase St8Sia II</fullName>
        <shortName>ST8SiaII</shortName>
    </alternativeName>
</protein>
<sequence>MQLQFRSWMLAALTLLVVFLIFADISEIEEEIGNSGGRGTIRSAVNSLHSKSNRAEVVINGSSSPAVVDRSNESIKHNIQPASSKWRHNQTLSLRIRKQILKFLDAEKDISVLKGTLKPGDIIHYIFDRDSTMNVSQNLYELLPRTSPLKNKHFGTCAIVGNSGVLLNSGCGQEIDAHSFVIRCNLAPVQEYARDVGLKTDLVTMNPSVIQRAFEDLVNATWREKLLQRLHSLNGSILWIPAFMARGGKERVEWVNELILKHHVNVRTAYPSLPLLHAVRGYWLTNKVHIKRPTTGLLMYTLATRFCNQIYLYGFWPFPLDQNQNPVKYHYYDSLKYGYTSQASPHTMPLEFKALKSLHEQGALKLTVGQCDGAT</sequence>
<reference key="1">
    <citation type="submission" date="2004-04" db="EMBL/GenBank/DDBJ databases">
        <title>Phylogeny of sialyltransferases.</title>
        <authorList>
            <person name="Harduin-Lepers A."/>
            <person name="Martinez-Duncker I."/>
            <person name="Mollicone R."/>
            <person name="Delannoy P."/>
            <person name="Oriol R."/>
        </authorList>
    </citation>
    <scope>NUCLEOTIDE SEQUENCE [MRNA]</scope>
</reference>
<accession>P61643</accession>
<keyword id="KW-1003">Cell membrane</keyword>
<keyword id="KW-1015">Disulfide bond</keyword>
<keyword id="KW-0325">Glycoprotein</keyword>
<keyword id="KW-0328">Glycosyltransferase</keyword>
<keyword id="KW-0333">Golgi apparatus</keyword>
<keyword id="KW-0472">Membrane</keyword>
<keyword id="KW-0547">Nucleotide-binding</keyword>
<keyword id="KW-1185">Reference proteome</keyword>
<keyword id="KW-0964">Secreted</keyword>
<keyword id="KW-0735">Signal-anchor</keyword>
<keyword id="KW-0808">Transferase</keyword>
<keyword id="KW-0812">Transmembrane</keyword>
<keyword id="KW-1133">Transmembrane helix</keyword>
<proteinExistence type="evidence at transcript level"/>
<evidence type="ECO:0000250" key="1">
    <source>
        <dbReference type="UniProtKB" id="O35696"/>
    </source>
</evidence>
<evidence type="ECO:0000250" key="2">
    <source>
        <dbReference type="UniProtKB" id="O43173"/>
    </source>
</evidence>
<evidence type="ECO:0000250" key="3">
    <source>
        <dbReference type="UniProtKB" id="Q92186"/>
    </source>
</evidence>
<evidence type="ECO:0000255" key="4"/>
<evidence type="ECO:0000305" key="5"/>
<feature type="chain" id="PRO_0000149287" description="Alpha-2,8-sialyltransferase 8B">
    <location>
        <begin position="1"/>
        <end position="375"/>
    </location>
</feature>
<feature type="topological domain" description="Cytoplasmic" evidence="4">
    <location>
        <begin position="1"/>
        <end position="6"/>
    </location>
</feature>
<feature type="transmembrane region" description="Helical; Signal-anchor for type II membrane protein" evidence="4">
    <location>
        <begin position="7"/>
        <end position="23"/>
    </location>
</feature>
<feature type="topological domain" description="Lumenal" evidence="4">
    <location>
        <begin position="24"/>
        <end position="375"/>
    </location>
</feature>
<feature type="active site" description="Proton donor/acceptor" evidence="2">
    <location>
        <position position="346"/>
    </location>
</feature>
<feature type="binding site" evidence="2">
    <location>
        <position position="162"/>
    </location>
    <ligand>
        <name>CMP-N-acetyl-beta-neuraminate</name>
        <dbReference type="ChEBI" id="CHEBI:57812"/>
    </ligand>
</feature>
<feature type="binding site" evidence="2">
    <location>
        <position position="185"/>
    </location>
    <ligand>
        <name>CMP-N-acetyl-beta-neuraminate</name>
        <dbReference type="ChEBI" id="CHEBI:57812"/>
    </ligand>
</feature>
<feature type="binding site" evidence="2">
    <location>
        <position position="294"/>
    </location>
    <ligand>
        <name>CMP-N-acetyl-beta-neuraminate</name>
        <dbReference type="ChEBI" id="CHEBI:57812"/>
    </ligand>
</feature>
<feature type="binding site" evidence="2">
    <location>
        <position position="295"/>
    </location>
    <ligand>
        <name>CMP-N-acetyl-beta-neuraminate</name>
        <dbReference type="ChEBI" id="CHEBI:57812"/>
    </ligand>
</feature>
<feature type="binding site" evidence="2">
    <location>
        <position position="296"/>
    </location>
    <ligand>
        <name>CMP-N-acetyl-beta-neuraminate</name>
        <dbReference type="ChEBI" id="CHEBI:57812"/>
    </ligand>
</feature>
<feature type="binding site" evidence="2">
    <location>
        <position position="316"/>
    </location>
    <ligand>
        <name>CMP-N-acetyl-beta-neuraminate</name>
        <dbReference type="ChEBI" id="CHEBI:57812"/>
    </ligand>
</feature>
<feature type="binding site" evidence="2">
    <location>
        <position position="329"/>
    </location>
    <ligand>
        <name>CMP-N-acetyl-beta-neuraminate</name>
        <dbReference type="ChEBI" id="CHEBI:57812"/>
    </ligand>
</feature>
<feature type="binding site" evidence="2">
    <location>
        <position position="330"/>
    </location>
    <ligand>
        <name>CMP-N-acetyl-beta-neuraminate</name>
        <dbReference type="ChEBI" id="CHEBI:57812"/>
    </ligand>
</feature>
<feature type="glycosylation site" description="N-linked (GlcNAc...) asparagine" evidence="4">
    <location>
        <position position="60"/>
    </location>
</feature>
<feature type="glycosylation site" description="N-linked (GlcNAc...) asparagine" evidence="4">
    <location>
        <position position="72"/>
    </location>
</feature>
<feature type="glycosylation site" description="N-linked (GlcNAc...) asparagine" evidence="4">
    <location>
        <position position="89"/>
    </location>
</feature>
<feature type="glycosylation site" description="N-linked (GlcNAc...) asparagine" evidence="4">
    <location>
        <position position="134"/>
    </location>
</feature>
<feature type="glycosylation site" description="N-linked (GlcNAc...) asparagine" evidence="4">
    <location>
        <position position="219"/>
    </location>
</feature>
<feature type="glycosylation site" description="N-linked (GlcNAc...) asparagine" evidence="4">
    <location>
        <position position="234"/>
    </location>
</feature>
<feature type="disulfide bond" evidence="2">
    <location>
        <begin position="157"/>
        <end position="307"/>
    </location>
</feature>
<feature type="disulfide bond" evidence="2">
    <location>
        <begin position="171"/>
        <end position="371"/>
    </location>
</feature>
<dbReference type="EC" id="2.4.3.-" evidence="3"/>
<dbReference type="EMBL" id="AJ697659">
    <property type="protein sequence ID" value="CAG26897.1"/>
    <property type="molecule type" value="mRNA"/>
</dbReference>
<dbReference type="RefSeq" id="NP_001032377.1">
    <property type="nucleotide sequence ID" value="NM_001037300.1"/>
</dbReference>
<dbReference type="SMR" id="P61643"/>
<dbReference type="STRING" id="9598.ENSPTRP00000077312"/>
<dbReference type="CAZy" id="GT29">
    <property type="family name" value="Glycosyltransferase Family 29"/>
</dbReference>
<dbReference type="GlyCosmos" id="P61643">
    <property type="glycosylation" value="6 sites, No reported glycans"/>
</dbReference>
<dbReference type="PaxDb" id="9598-ENSPTRP00000012772"/>
<dbReference type="GeneID" id="453661"/>
<dbReference type="KEGG" id="ptr:453661"/>
<dbReference type="CTD" id="8128"/>
<dbReference type="eggNOG" id="KOG2692">
    <property type="taxonomic scope" value="Eukaryota"/>
</dbReference>
<dbReference type="InParanoid" id="P61643"/>
<dbReference type="OrthoDB" id="3820at9604"/>
<dbReference type="UniPathway" id="UPA00378"/>
<dbReference type="Proteomes" id="UP000002277">
    <property type="component" value="Unplaced"/>
</dbReference>
<dbReference type="GO" id="GO:0005576">
    <property type="term" value="C:extracellular region"/>
    <property type="evidence" value="ECO:0000250"/>
    <property type="project" value="UniProtKB"/>
</dbReference>
<dbReference type="GO" id="GO:0005794">
    <property type="term" value="C:Golgi apparatus"/>
    <property type="evidence" value="ECO:0000250"/>
    <property type="project" value="UniProtKB"/>
</dbReference>
<dbReference type="GO" id="GO:0000139">
    <property type="term" value="C:Golgi membrane"/>
    <property type="evidence" value="ECO:0007669"/>
    <property type="project" value="UniProtKB-SubCell"/>
</dbReference>
<dbReference type="GO" id="GO:0005886">
    <property type="term" value="C:plasma membrane"/>
    <property type="evidence" value="ECO:0007669"/>
    <property type="project" value="UniProtKB-SubCell"/>
</dbReference>
<dbReference type="GO" id="GO:0003828">
    <property type="term" value="F:alpha-N-acetylneuraminate alpha-2,8-sialyltransferase activity"/>
    <property type="evidence" value="ECO:0000250"/>
    <property type="project" value="UniProtKB"/>
</dbReference>
<dbReference type="GO" id="GO:0000166">
    <property type="term" value="F:nucleotide binding"/>
    <property type="evidence" value="ECO:0007669"/>
    <property type="project" value="UniProtKB-KW"/>
</dbReference>
<dbReference type="GO" id="GO:0006491">
    <property type="term" value="P:N-glycan processing"/>
    <property type="evidence" value="ECO:0000318"/>
    <property type="project" value="GO_Central"/>
</dbReference>
<dbReference type="GO" id="GO:0009311">
    <property type="term" value="P:oligosaccharide metabolic process"/>
    <property type="evidence" value="ECO:0000318"/>
    <property type="project" value="GO_Central"/>
</dbReference>
<dbReference type="GO" id="GO:0006486">
    <property type="term" value="P:protein glycosylation"/>
    <property type="evidence" value="ECO:0000318"/>
    <property type="project" value="GO_Central"/>
</dbReference>
<dbReference type="GO" id="GO:0097503">
    <property type="term" value="P:sialylation"/>
    <property type="evidence" value="ECO:0000250"/>
    <property type="project" value="UniProtKB"/>
</dbReference>
<dbReference type="CDD" id="cd23987">
    <property type="entry name" value="GT29_ST8SIA2"/>
    <property type="match status" value="1"/>
</dbReference>
<dbReference type="FunFam" id="3.90.1480.20:FF:000001">
    <property type="entry name" value="ST8 alpha-N-acetyl-neuraminide alpha-2,8-sialyltransferase 2"/>
    <property type="match status" value="1"/>
</dbReference>
<dbReference type="Gene3D" id="3.90.1480.20">
    <property type="entry name" value="Glycosyl transferase family 29"/>
    <property type="match status" value="1"/>
</dbReference>
<dbReference type="InterPro" id="IPR001675">
    <property type="entry name" value="Glyco_trans_29"/>
</dbReference>
<dbReference type="InterPro" id="IPR050943">
    <property type="entry name" value="Glycosyltr_29_Sialyltrsf"/>
</dbReference>
<dbReference type="InterPro" id="IPR038578">
    <property type="entry name" value="GT29-like_sf"/>
</dbReference>
<dbReference type="InterPro" id="IPR012163">
    <property type="entry name" value="Sialyl_trans"/>
</dbReference>
<dbReference type="PANTHER" id="PTHR11987">
    <property type="entry name" value="ALPHA-2,8-SIALYLTRANSFERASE"/>
    <property type="match status" value="1"/>
</dbReference>
<dbReference type="PANTHER" id="PTHR11987:SF30">
    <property type="entry name" value="ALPHA-2,8-SIALYLTRANSFERASE 8B"/>
    <property type="match status" value="1"/>
</dbReference>
<dbReference type="Pfam" id="PF00777">
    <property type="entry name" value="Glyco_transf_29"/>
    <property type="match status" value="1"/>
</dbReference>
<dbReference type="PIRSF" id="PIRSF005557">
    <property type="entry name" value="Sialyl_trans"/>
    <property type="match status" value="1"/>
</dbReference>
<name>SIA8B_PANTR</name>
<gene>
    <name evidence="3" type="primary">ST8SIA2</name>
    <name type="synonym">SIAT8B</name>
</gene>
<organism>
    <name type="scientific">Pan troglodytes</name>
    <name type="common">Chimpanzee</name>
    <dbReference type="NCBI Taxonomy" id="9598"/>
    <lineage>
        <taxon>Eukaryota</taxon>
        <taxon>Metazoa</taxon>
        <taxon>Chordata</taxon>
        <taxon>Craniata</taxon>
        <taxon>Vertebrata</taxon>
        <taxon>Euteleostomi</taxon>
        <taxon>Mammalia</taxon>
        <taxon>Eutheria</taxon>
        <taxon>Euarchontoglires</taxon>
        <taxon>Primates</taxon>
        <taxon>Haplorrhini</taxon>
        <taxon>Catarrhini</taxon>
        <taxon>Hominidae</taxon>
        <taxon>Pan</taxon>
    </lineage>
</organism>